<reference key="1">
    <citation type="journal article" date="2005" name="BMC Genomics">
        <title>Characterization of 954 bovine full-CDS cDNA sequences.</title>
        <authorList>
            <person name="Harhay G.P."/>
            <person name="Sonstegard T.S."/>
            <person name="Keele J.W."/>
            <person name="Heaton M.P."/>
            <person name="Clawson M.L."/>
            <person name="Snelling W.M."/>
            <person name="Wiedmann R.T."/>
            <person name="Van Tassell C.P."/>
            <person name="Smith T.P.L."/>
        </authorList>
    </citation>
    <scope>NUCLEOTIDE SEQUENCE [LARGE SCALE MRNA]</scope>
</reference>
<reference key="2">
    <citation type="submission" date="2005-09" db="EMBL/GenBank/DDBJ databases">
        <authorList>
            <consortium name="NIH - Mammalian Gene Collection (MGC) project"/>
        </authorList>
    </citation>
    <scope>NUCLEOTIDE SEQUENCE [LARGE SCALE MRNA]</scope>
    <source>
        <strain>Hereford</strain>
        <tissue>Fetal liver</tissue>
    </source>
</reference>
<protein>
    <recommendedName>
        <fullName>Transmembrane emp24 domain-containing protein 5</fullName>
    </recommendedName>
    <alternativeName>
        <fullName>p24 family protein gamma 2</fullName>
        <shortName>p24gamma2</shortName>
    </alternativeName>
</protein>
<sequence>MGDKTWLPFPVVLLAALLLPRAAGFTPSLDSDFTFTLPAGQKECFYQPMPLKASLEIEYQVLDGAGLDIDFHLASPEGKTLVFEQRKSDGVHTIETEVGDYMFCFDNTFSTISEKVIFFELILDNMGEQEQEQEDWKKYITGTDMLDMKLEDILESINSIKSRLSKSGHIQTLLRAFEARDRNIQESNFDRVNFWSMVNLVVMVVVSAIQVYMLKSLFEDKRKSRT</sequence>
<evidence type="ECO:0000250" key="1"/>
<evidence type="ECO:0000255" key="2"/>
<evidence type="ECO:0000255" key="3">
    <source>
        <dbReference type="PROSITE-ProRule" id="PRU00096"/>
    </source>
</evidence>
<evidence type="ECO:0000305" key="4"/>
<gene>
    <name type="primary">TMED5</name>
</gene>
<feature type="signal peptide" evidence="2">
    <location>
        <begin position="1"/>
        <end position="24"/>
    </location>
</feature>
<feature type="chain" id="PRO_0000240347" description="Transmembrane emp24 domain-containing protein 5">
    <location>
        <begin position="25"/>
        <end position="226"/>
    </location>
</feature>
<feature type="topological domain" description="Lumenal" evidence="2">
    <location>
        <begin position="25"/>
        <end position="193"/>
    </location>
</feature>
<feature type="transmembrane region" description="Helical" evidence="2">
    <location>
        <begin position="194"/>
        <end position="214"/>
    </location>
</feature>
<feature type="topological domain" description="Cytoplasmic" evidence="2">
    <location>
        <begin position="215"/>
        <end position="226"/>
    </location>
</feature>
<feature type="domain" description="GOLD" evidence="3">
    <location>
        <begin position="42"/>
        <end position="123"/>
    </location>
</feature>
<feature type="short sequence motif" description="Mediates export from ER" evidence="2">
    <location>
        <begin position="217"/>
        <end position="218"/>
    </location>
</feature>
<proteinExistence type="evidence at transcript level"/>
<name>TMED5_BOVIN</name>
<organism>
    <name type="scientific">Bos taurus</name>
    <name type="common">Bovine</name>
    <dbReference type="NCBI Taxonomy" id="9913"/>
    <lineage>
        <taxon>Eukaryota</taxon>
        <taxon>Metazoa</taxon>
        <taxon>Chordata</taxon>
        <taxon>Craniata</taxon>
        <taxon>Vertebrata</taxon>
        <taxon>Euteleostomi</taxon>
        <taxon>Mammalia</taxon>
        <taxon>Eutheria</taxon>
        <taxon>Laurasiatheria</taxon>
        <taxon>Artiodactyla</taxon>
        <taxon>Ruminantia</taxon>
        <taxon>Pecora</taxon>
        <taxon>Bovidae</taxon>
        <taxon>Bovinae</taxon>
        <taxon>Bos</taxon>
    </lineage>
</organism>
<keyword id="KW-0256">Endoplasmic reticulum</keyword>
<keyword id="KW-0333">Golgi apparatus</keyword>
<keyword id="KW-0472">Membrane</keyword>
<keyword id="KW-0653">Protein transport</keyword>
<keyword id="KW-1185">Reference proteome</keyword>
<keyword id="KW-0732">Signal</keyword>
<keyword id="KW-0812">Transmembrane</keyword>
<keyword id="KW-1133">Transmembrane helix</keyword>
<keyword id="KW-0813">Transport</keyword>
<dbReference type="EMBL" id="BT030528">
    <property type="protein sequence ID" value="ABQ12968.1"/>
    <property type="molecule type" value="mRNA"/>
</dbReference>
<dbReference type="EMBL" id="BC105474">
    <property type="protein sequence ID" value="AAI05475.1"/>
    <property type="molecule type" value="mRNA"/>
</dbReference>
<dbReference type="RefSeq" id="NP_001039842.1">
    <property type="nucleotide sequence ID" value="NM_001046377.1"/>
</dbReference>
<dbReference type="SMR" id="Q2KJ84"/>
<dbReference type="FunCoup" id="Q2KJ84">
    <property type="interactions" value="1904"/>
</dbReference>
<dbReference type="STRING" id="9913.ENSBTAP00000065997"/>
<dbReference type="PaxDb" id="9913-ENSBTAP00000032097"/>
<dbReference type="Ensembl" id="ENSBTAT00000032159.4">
    <property type="protein sequence ID" value="ENSBTAP00000032097.2"/>
    <property type="gene ID" value="ENSBTAG00000020180.5"/>
</dbReference>
<dbReference type="GeneID" id="534351"/>
<dbReference type="KEGG" id="bta:534351"/>
<dbReference type="CTD" id="50999"/>
<dbReference type="VEuPathDB" id="HostDB:ENSBTAG00000020180"/>
<dbReference type="VGNC" id="VGNC:35938">
    <property type="gene designation" value="TMED5"/>
</dbReference>
<dbReference type="eggNOG" id="KOG3287">
    <property type="taxonomic scope" value="Eukaryota"/>
</dbReference>
<dbReference type="GeneTree" id="ENSGT00940000155468"/>
<dbReference type="HOGENOM" id="CLU_066963_0_0_1"/>
<dbReference type="InParanoid" id="Q2KJ84"/>
<dbReference type="OrthoDB" id="5976732at2759"/>
<dbReference type="TreeFam" id="TF313000"/>
<dbReference type="Reactome" id="R-BTA-3238698">
    <property type="pathway name" value="WNT ligand biogenesis and trafficking"/>
</dbReference>
<dbReference type="Proteomes" id="UP000009136">
    <property type="component" value="Chromosome 3"/>
</dbReference>
<dbReference type="Bgee" id="ENSBTAG00000020180">
    <property type="expression patterns" value="Expressed in spiral colon and 108 other cell types or tissues"/>
</dbReference>
<dbReference type="GO" id="GO:0005801">
    <property type="term" value="C:cis-Golgi network"/>
    <property type="evidence" value="ECO:0007669"/>
    <property type="project" value="Ensembl"/>
</dbReference>
<dbReference type="GO" id="GO:0030134">
    <property type="term" value="C:COPII-coated ER to Golgi transport vesicle"/>
    <property type="evidence" value="ECO:0000318"/>
    <property type="project" value="GO_Central"/>
</dbReference>
<dbReference type="GO" id="GO:0005783">
    <property type="term" value="C:endoplasmic reticulum"/>
    <property type="evidence" value="ECO:0000318"/>
    <property type="project" value="GO_Central"/>
</dbReference>
<dbReference type="GO" id="GO:0070971">
    <property type="term" value="C:endoplasmic reticulum exit site"/>
    <property type="evidence" value="ECO:0007669"/>
    <property type="project" value="Ensembl"/>
</dbReference>
<dbReference type="GO" id="GO:0005789">
    <property type="term" value="C:endoplasmic reticulum membrane"/>
    <property type="evidence" value="ECO:0007669"/>
    <property type="project" value="UniProtKB-SubCell"/>
</dbReference>
<dbReference type="GO" id="GO:0005793">
    <property type="term" value="C:endoplasmic reticulum-Golgi intermediate compartment"/>
    <property type="evidence" value="ECO:0000318"/>
    <property type="project" value="GO_Central"/>
</dbReference>
<dbReference type="GO" id="GO:0033116">
    <property type="term" value="C:endoplasmic reticulum-Golgi intermediate compartment membrane"/>
    <property type="evidence" value="ECO:0007669"/>
    <property type="project" value="UniProtKB-SubCell"/>
</dbReference>
<dbReference type="GO" id="GO:0005794">
    <property type="term" value="C:Golgi apparatus"/>
    <property type="evidence" value="ECO:0000318"/>
    <property type="project" value="GO_Central"/>
</dbReference>
<dbReference type="GO" id="GO:0006888">
    <property type="term" value="P:endoplasmic reticulum to Golgi vesicle-mediated transport"/>
    <property type="evidence" value="ECO:0000318"/>
    <property type="project" value="GO_Central"/>
</dbReference>
<dbReference type="GO" id="GO:0090161">
    <property type="term" value="P:Golgi ribbon formation"/>
    <property type="evidence" value="ECO:0000318"/>
    <property type="project" value="GO_Central"/>
</dbReference>
<dbReference type="GO" id="GO:0006886">
    <property type="term" value="P:intracellular protein transport"/>
    <property type="evidence" value="ECO:0000318"/>
    <property type="project" value="GO_Central"/>
</dbReference>
<dbReference type="InterPro" id="IPR015720">
    <property type="entry name" value="Emp24-like"/>
</dbReference>
<dbReference type="InterPro" id="IPR009038">
    <property type="entry name" value="GOLD_dom"/>
</dbReference>
<dbReference type="InterPro" id="IPR036598">
    <property type="entry name" value="GOLD_dom_sf"/>
</dbReference>
<dbReference type="PANTHER" id="PTHR22811">
    <property type="entry name" value="TRANSMEMBRANE EMP24 DOMAIN-CONTAINING PROTEIN"/>
    <property type="match status" value="1"/>
</dbReference>
<dbReference type="Pfam" id="PF01105">
    <property type="entry name" value="EMP24_GP25L"/>
    <property type="match status" value="1"/>
</dbReference>
<dbReference type="SMART" id="SM01190">
    <property type="entry name" value="EMP24_GP25L"/>
    <property type="match status" value="1"/>
</dbReference>
<dbReference type="SUPFAM" id="SSF101576">
    <property type="entry name" value="Supernatant protein factor (SPF), C-terminal domain"/>
    <property type="match status" value="1"/>
</dbReference>
<dbReference type="PROSITE" id="PS50866">
    <property type="entry name" value="GOLD"/>
    <property type="match status" value="1"/>
</dbReference>
<comment type="function">
    <text evidence="1">Potential role in vesicular protein trafficking, mainly in the early secretory pathway. Required for the maintenance of the Golgi apparatus; involved in protein exchange between Golgi stacks during assembly. Probably not required for COPI-vesicle-mediated retrograde transport (By similarity).</text>
</comment>
<comment type="subunit">
    <text evidence="1">Interacts with TMED9 and TMED10.</text>
</comment>
<comment type="subcellular location">
    <subcellularLocation>
        <location evidence="1">Endoplasmic reticulum membrane</location>
        <topology evidence="1">Single-pass type I membrane protein</topology>
    </subcellularLocation>
    <subcellularLocation>
        <location evidence="1">Golgi apparatus</location>
        <location evidence="1">cis-Golgi network membrane</location>
        <topology evidence="1">Single-pass type I membrane protein</topology>
    </subcellularLocation>
    <subcellularLocation>
        <location evidence="1">Endoplasmic reticulum-Golgi intermediate compartment membrane</location>
        <topology evidence="1">Single-pass type I membrane protein</topology>
    </subcellularLocation>
    <text evidence="1">Probably cycles between compartments of the early secretatory pathway.</text>
</comment>
<comment type="similarity">
    <text evidence="4">Belongs to the EMP24/GP25L family.</text>
</comment>
<accession>Q2KJ84</accession>
<accession>A5D9A9</accession>